<proteinExistence type="inferred from homology"/>
<keyword id="KW-0030">Aminoacyl-tRNA synthetase</keyword>
<keyword id="KW-0067">ATP-binding</keyword>
<keyword id="KW-0963">Cytoplasm</keyword>
<keyword id="KW-0436">Ligase</keyword>
<keyword id="KW-0547">Nucleotide-binding</keyword>
<keyword id="KW-0648">Protein biosynthesis</keyword>
<reference key="1">
    <citation type="journal article" date="2004" name="Nat. Genet.">
        <title>Evidence in the Legionella pneumophila genome for exploitation of host cell functions and high genome plasticity.</title>
        <authorList>
            <person name="Cazalet C."/>
            <person name="Rusniok C."/>
            <person name="Brueggemann H."/>
            <person name="Zidane N."/>
            <person name="Magnier A."/>
            <person name="Ma L."/>
            <person name="Tichit M."/>
            <person name="Jarraud S."/>
            <person name="Bouchier C."/>
            <person name="Vandenesch F."/>
            <person name="Kunst F."/>
            <person name="Etienne J."/>
            <person name="Glaser P."/>
            <person name="Buchrieser C."/>
        </authorList>
    </citation>
    <scope>NUCLEOTIDE SEQUENCE [LARGE SCALE GENOMIC DNA]</scope>
    <source>
        <strain>Paris</strain>
    </source>
</reference>
<dbReference type="EC" id="6.1.1.19" evidence="1"/>
<dbReference type="EMBL" id="CR628336">
    <property type="protein sequence ID" value="CAH13165.1"/>
    <property type="molecule type" value="Genomic_DNA"/>
</dbReference>
<dbReference type="RefSeq" id="WP_011214277.1">
    <property type="nucleotide sequence ID" value="NC_006368.1"/>
</dbReference>
<dbReference type="SMR" id="Q5X3M1"/>
<dbReference type="KEGG" id="lpp:lpp2013"/>
<dbReference type="LegioList" id="lpp2013"/>
<dbReference type="HOGENOM" id="CLU_006406_0_1_6"/>
<dbReference type="GO" id="GO:0005737">
    <property type="term" value="C:cytoplasm"/>
    <property type="evidence" value="ECO:0007669"/>
    <property type="project" value="UniProtKB-SubCell"/>
</dbReference>
<dbReference type="GO" id="GO:0004814">
    <property type="term" value="F:arginine-tRNA ligase activity"/>
    <property type="evidence" value="ECO:0007669"/>
    <property type="project" value="UniProtKB-UniRule"/>
</dbReference>
<dbReference type="GO" id="GO:0005524">
    <property type="term" value="F:ATP binding"/>
    <property type="evidence" value="ECO:0007669"/>
    <property type="project" value="UniProtKB-UniRule"/>
</dbReference>
<dbReference type="GO" id="GO:0006420">
    <property type="term" value="P:arginyl-tRNA aminoacylation"/>
    <property type="evidence" value="ECO:0007669"/>
    <property type="project" value="UniProtKB-UniRule"/>
</dbReference>
<dbReference type="CDD" id="cd00671">
    <property type="entry name" value="ArgRS_core"/>
    <property type="match status" value="1"/>
</dbReference>
<dbReference type="FunFam" id="1.10.730.10:FF:000008">
    <property type="entry name" value="Arginine--tRNA ligase"/>
    <property type="match status" value="1"/>
</dbReference>
<dbReference type="FunFam" id="3.30.1360.70:FF:000003">
    <property type="entry name" value="Arginine--tRNA ligase"/>
    <property type="match status" value="1"/>
</dbReference>
<dbReference type="Gene3D" id="3.30.1360.70">
    <property type="entry name" value="Arginyl tRNA synthetase N-terminal domain"/>
    <property type="match status" value="1"/>
</dbReference>
<dbReference type="Gene3D" id="3.40.50.620">
    <property type="entry name" value="HUPs"/>
    <property type="match status" value="1"/>
</dbReference>
<dbReference type="Gene3D" id="1.10.730.10">
    <property type="entry name" value="Isoleucyl-tRNA Synthetase, Domain 1"/>
    <property type="match status" value="1"/>
</dbReference>
<dbReference type="HAMAP" id="MF_00123">
    <property type="entry name" value="Arg_tRNA_synth"/>
    <property type="match status" value="1"/>
</dbReference>
<dbReference type="InterPro" id="IPR001412">
    <property type="entry name" value="aa-tRNA-synth_I_CS"/>
</dbReference>
<dbReference type="InterPro" id="IPR001278">
    <property type="entry name" value="Arg-tRNA-ligase"/>
</dbReference>
<dbReference type="InterPro" id="IPR005148">
    <property type="entry name" value="Arg-tRNA-synth_N"/>
</dbReference>
<dbReference type="InterPro" id="IPR036695">
    <property type="entry name" value="Arg-tRNA-synth_N_sf"/>
</dbReference>
<dbReference type="InterPro" id="IPR035684">
    <property type="entry name" value="ArgRS_core"/>
</dbReference>
<dbReference type="InterPro" id="IPR008909">
    <property type="entry name" value="DALR_anticod-bd"/>
</dbReference>
<dbReference type="InterPro" id="IPR014729">
    <property type="entry name" value="Rossmann-like_a/b/a_fold"/>
</dbReference>
<dbReference type="InterPro" id="IPR009080">
    <property type="entry name" value="tRNAsynth_Ia_anticodon-bd"/>
</dbReference>
<dbReference type="NCBIfam" id="TIGR00456">
    <property type="entry name" value="argS"/>
    <property type="match status" value="1"/>
</dbReference>
<dbReference type="PANTHER" id="PTHR11956:SF5">
    <property type="entry name" value="ARGININE--TRNA LIGASE, CYTOPLASMIC"/>
    <property type="match status" value="1"/>
</dbReference>
<dbReference type="PANTHER" id="PTHR11956">
    <property type="entry name" value="ARGINYL-TRNA SYNTHETASE"/>
    <property type="match status" value="1"/>
</dbReference>
<dbReference type="Pfam" id="PF03485">
    <property type="entry name" value="Arg_tRNA_synt_N"/>
    <property type="match status" value="1"/>
</dbReference>
<dbReference type="Pfam" id="PF05746">
    <property type="entry name" value="DALR_1"/>
    <property type="match status" value="1"/>
</dbReference>
<dbReference type="Pfam" id="PF00750">
    <property type="entry name" value="tRNA-synt_1d"/>
    <property type="match status" value="2"/>
</dbReference>
<dbReference type="PRINTS" id="PR01038">
    <property type="entry name" value="TRNASYNTHARG"/>
</dbReference>
<dbReference type="SMART" id="SM01016">
    <property type="entry name" value="Arg_tRNA_synt_N"/>
    <property type="match status" value="1"/>
</dbReference>
<dbReference type="SMART" id="SM00836">
    <property type="entry name" value="DALR_1"/>
    <property type="match status" value="1"/>
</dbReference>
<dbReference type="SUPFAM" id="SSF47323">
    <property type="entry name" value="Anticodon-binding domain of a subclass of class I aminoacyl-tRNA synthetases"/>
    <property type="match status" value="1"/>
</dbReference>
<dbReference type="SUPFAM" id="SSF55190">
    <property type="entry name" value="Arginyl-tRNA synthetase (ArgRS), N-terminal 'additional' domain"/>
    <property type="match status" value="1"/>
</dbReference>
<dbReference type="SUPFAM" id="SSF52374">
    <property type="entry name" value="Nucleotidylyl transferase"/>
    <property type="match status" value="1"/>
</dbReference>
<dbReference type="PROSITE" id="PS00178">
    <property type="entry name" value="AA_TRNA_LIGASE_I"/>
    <property type="match status" value="1"/>
</dbReference>
<accession>Q5X3M1</accession>
<sequence length="589" mass="66082">MRSMKAIIEYLLKQALINLQQSGEMPIDLEVEIKVENAKDPSHGDYATNLALVLAKPCRQAPKVLAERLVAVIPADPSVEKIEIAGAGFINFFMRSTARSLIISEILNKGKEFGRGNLGQSQKVLIEFVSANPTGPLHVGHGRGAAFGATLGNVLKAAGYDVTLEYYVNDAGRQMNILAVSVWLRYLELAGEPIVFPTNGYKGQYVYEIAQEMWSEQGNQFVHPWISVVENLPADEPEGGDKETYIDAIIARAQSLLGKDGFANFHQHALKTVLDDIKDDLQAFGVRFDSWFSEQSLFEDGSIEKGIQALKDRGHTYEREGALWFRATDFGDEKDRVLVRANGQTTYFASDVAYHWNKYDRGFDRVIDIFGADHHGYVTRIKTAVKALGHDESALDVILVQFAILYRGGDRVQMSTRSGSFVTLRELREEVGNDAARYFYVARKPEQHMDFDLDLAKSESSDNPVYYIQYAHARICSVLRQLKERGLKWDKDMGLKNLDLLEQQHETTLISLIARYPEVIQSAAASCEPHQLAYYLRELANGLHSYYNAIQLLCEQEQLRCARLCLLESVRQVLNNGLAILGVSAPESM</sequence>
<protein>
    <recommendedName>
        <fullName evidence="1">Arginine--tRNA ligase</fullName>
        <ecNumber evidence="1">6.1.1.19</ecNumber>
    </recommendedName>
    <alternativeName>
        <fullName evidence="1">Arginyl-tRNA synthetase</fullName>
        <shortName evidence="1">ArgRS</shortName>
    </alternativeName>
</protein>
<feature type="chain" id="PRO_0000242038" description="Arginine--tRNA ligase">
    <location>
        <begin position="1"/>
        <end position="589"/>
    </location>
</feature>
<feature type="short sequence motif" description="'HIGH' region">
    <location>
        <begin position="131"/>
        <end position="141"/>
    </location>
</feature>
<comment type="catalytic activity">
    <reaction evidence="1">
        <text>tRNA(Arg) + L-arginine + ATP = L-arginyl-tRNA(Arg) + AMP + diphosphate</text>
        <dbReference type="Rhea" id="RHEA:20301"/>
        <dbReference type="Rhea" id="RHEA-COMP:9658"/>
        <dbReference type="Rhea" id="RHEA-COMP:9673"/>
        <dbReference type="ChEBI" id="CHEBI:30616"/>
        <dbReference type="ChEBI" id="CHEBI:32682"/>
        <dbReference type="ChEBI" id="CHEBI:33019"/>
        <dbReference type="ChEBI" id="CHEBI:78442"/>
        <dbReference type="ChEBI" id="CHEBI:78513"/>
        <dbReference type="ChEBI" id="CHEBI:456215"/>
        <dbReference type="EC" id="6.1.1.19"/>
    </reaction>
</comment>
<comment type="subunit">
    <text evidence="1">Monomer.</text>
</comment>
<comment type="subcellular location">
    <subcellularLocation>
        <location evidence="1">Cytoplasm</location>
    </subcellularLocation>
</comment>
<comment type="similarity">
    <text evidence="1">Belongs to the class-I aminoacyl-tRNA synthetase family.</text>
</comment>
<evidence type="ECO:0000255" key="1">
    <source>
        <dbReference type="HAMAP-Rule" id="MF_00123"/>
    </source>
</evidence>
<organism>
    <name type="scientific">Legionella pneumophila (strain Paris)</name>
    <dbReference type="NCBI Taxonomy" id="297246"/>
    <lineage>
        <taxon>Bacteria</taxon>
        <taxon>Pseudomonadati</taxon>
        <taxon>Pseudomonadota</taxon>
        <taxon>Gammaproteobacteria</taxon>
        <taxon>Legionellales</taxon>
        <taxon>Legionellaceae</taxon>
        <taxon>Legionella</taxon>
    </lineage>
</organism>
<name>SYR_LEGPA</name>
<gene>
    <name evidence="1" type="primary">argS</name>
    <name type="ordered locus">lpp2013</name>
</gene>